<gene>
    <name evidence="1" type="primary">pyrH</name>
    <name type="ordered locus">H16_A2053</name>
</gene>
<protein>
    <recommendedName>
        <fullName evidence="1">Uridylate kinase</fullName>
        <shortName evidence="1">UK</shortName>
        <ecNumber evidence="1">2.7.4.22</ecNumber>
    </recommendedName>
    <alternativeName>
        <fullName evidence="1">Uridine monophosphate kinase</fullName>
        <shortName evidence="1">UMP kinase</shortName>
        <shortName evidence="1">UMPK</shortName>
    </alternativeName>
</protein>
<feature type="chain" id="PRO_1000053993" description="Uridylate kinase">
    <location>
        <begin position="1"/>
        <end position="236"/>
    </location>
</feature>
<feature type="binding site" evidence="1">
    <location>
        <begin position="10"/>
        <end position="13"/>
    </location>
    <ligand>
        <name>ATP</name>
        <dbReference type="ChEBI" id="CHEBI:30616"/>
    </ligand>
</feature>
<feature type="binding site" evidence="1">
    <location>
        <position position="52"/>
    </location>
    <ligand>
        <name>UMP</name>
        <dbReference type="ChEBI" id="CHEBI:57865"/>
    </ligand>
</feature>
<feature type="binding site" evidence="1">
    <location>
        <position position="53"/>
    </location>
    <ligand>
        <name>ATP</name>
        <dbReference type="ChEBI" id="CHEBI:30616"/>
    </ligand>
</feature>
<feature type="binding site" evidence="1">
    <location>
        <position position="57"/>
    </location>
    <ligand>
        <name>ATP</name>
        <dbReference type="ChEBI" id="CHEBI:30616"/>
    </ligand>
</feature>
<feature type="binding site" evidence="1">
    <location>
        <position position="72"/>
    </location>
    <ligand>
        <name>UMP</name>
        <dbReference type="ChEBI" id="CHEBI:57865"/>
    </ligand>
</feature>
<feature type="binding site" evidence="1">
    <location>
        <begin position="133"/>
        <end position="140"/>
    </location>
    <ligand>
        <name>UMP</name>
        <dbReference type="ChEBI" id="CHEBI:57865"/>
    </ligand>
</feature>
<feature type="binding site" evidence="1">
    <location>
        <position position="160"/>
    </location>
    <ligand>
        <name>ATP</name>
        <dbReference type="ChEBI" id="CHEBI:30616"/>
    </ligand>
</feature>
<feature type="binding site" evidence="1">
    <location>
        <position position="166"/>
    </location>
    <ligand>
        <name>ATP</name>
        <dbReference type="ChEBI" id="CHEBI:30616"/>
    </ligand>
</feature>
<feature type="binding site" evidence="1">
    <location>
        <position position="169"/>
    </location>
    <ligand>
        <name>ATP</name>
        <dbReference type="ChEBI" id="CHEBI:30616"/>
    </ligand>
</feature>
<sequence>MPAYKRVLLKLSGEALMGDDAFGINRSTIEAMVNDIAEIVKLGVQVAVVIGGGNIFRGVAGGAAGMDRATADYMGMLATMMNALALQDAMRHANIEGRVQSALRMDQVVEPYIRPRAIRQLEEGKVVIFAAGTGNPFFTTDTAAALRGSEIGAEVVLKATKVDGVYTADPKKDPSATRYTTISFDEAISRNLQVMDATAFALCRDQKLPIRVFSIVKPGALKRIILGEDEGTLVHV</sequence>
<evidence type="ECO:0000255" key="1">
    <source>
        <dbReference type="HAMAP-Rule" id="MF_01220"/>
    </source>
</evidence>
<keyword id="KW-0067">ATP-binding</keyword>
<keyword id="KW-0963">Cytoplasm</keyword>
<keyword id="KW-0418">Kinase</keyword>
<keyword id="KW-0547">Nucleotide-binding</keyword>
<keyword id="KW-0665">Pyrimidine biosynthesis</keyword>
<keyword id="KW-1185">Reference proteome</keyword>
<keyword id="KW-0808">Transferase</keyword>
<reference key="1">
    <citation type="journal article" date="2006" name="Nat. Biotechnol.">
        <title>Genome sequence of the bioplastic-producing 'Knallgas' bacterium Ralstonia eutropha H16.</title>
        <authorList>
            <person name="Pohlmann A."/>
            <person name="Fricke W.F."/>
            <person name="Reinecke F."/>
            <person name="Kusian B."/>
            <person name="Liesegang H."/>
            <person name="Cramm R."/>
            <person name="Eitinger T."/>
            <person name="Ewering C."/>
            <person name="Poetter M."/>
            <person name="Schwartz E."/>
            <person name="Strittmatter A."/>
            <person name="Voss I."/>
            <person name="Gottschalk G."/>
            <person name="Steinbuechel A."/>
            <person name="Friedrich B."/>
            <person name="Bowien B."/>
        </authorList>
    </citation>
    <scope>NUCLEOTIDE SEQUENCE [LARGE SCALE GENOMIC DNA]</scope>
    <source>
        <strain>ATCC 17699 / DSM 428 / KCTC 22496 / NCIMB 10442 / H16 / Stanier 337</strain>
    </source>
</reference>
<comment type="function">
    <text evidence="1">Catalyzes the reversible phosphorylation of UMP to UDP.</text>
</comment>
<comment type="catalytic activity">
    <reaction evidence="1">
        <text>UMP + ATP = UDP + ADP</text>
        <dbReference type="Rhea" id="RHEA:24400"/>
        <dbReference type="ChEBI" id="CHEBI:30616"/>
        <dbReference type="ChEBI" id="CHEBI:57865"/>
        <dbReference type="ChEBI" id="CHEBI:58223"/>
        <dbReference type="ChEBI" id="CHEBI:456216"/>
        <dbReference type="EC" id="2.7.4.22"/>
    </reaction>
</comment>
<comment type="activity regulation">
    <text evidence="1">Inhibited by UTP.</text>
</comment>
<comment type="pathway">
    <text evidence="1">Pyrimidine metabolism; CTP biosynthesis via de novo pathway; UDP from UMP (UMPK route): step 1/1.</text>
</comment>
<comment type="subunit">
    <text evidence="1">Homohexamer.</text>
</comment>
<comment type="subcellular location">
    <subcellularLocation>
        <location evidence="1">Cytoplasm</location>
    </subcellularLocation>
</comment>
<comment type="similarity">
    <text evidence="1">Belongs to the UMP kinase family.</text>
</comment>
<accession>Q0KA18</accession>
<proteinExistence type="inferred from homology"/>
<name>PYRH_CUPNH</name>
<dbReference type="EC" id="2.7.4.22" evidence="1"/>
<dbReference type="EMBL" id="AM260479">
    <property type="protein sequence ID" value="CAJ93153.1"/>
    <property type="molecule type" value="Genomic_DNA"/>
</dbReference>
<dbReference type="RefSeq" id="WP_010809599.1">
    <property type="nucleotide sequence ID" value="NZ_CP039287.1"/>
</dbReference>
<dbReference type="SMR" id="Q0KA18"/>
<dbReference type="STRING" id="381666.H16_A2053"/>
<dbReference type="KEGG" id="reh:H16_A2053"/>
<dbReference type="eggNOG" id="COG0528">
    <property type="taxonomic scope" value="Bacteria"/>
</dbReference>
<dbReference type="HOGENOM" id="CLU_033861_0_0_4"/>
<dbReference type="OrthoDB" id="9807458at2"/>
<dbReference type="UniPathway" id="UPA00159">
    <property type="reaction ID" value="UER00275"/>
</dbReference>
<dbReference type="Proteomes" id="UP000008210">
    <property type="component" value="Chromosome 1"/>
</dbReference>
<dbReference type="GO" id="GO:0005829">
    <property type="term" value="C:cytosol"/>
    <property type="evidence" value="ECO:0007669"/>
    <property type="project" value="TreeGrafter"/>
</dbReference>
<dbReference type="GO" id="GO:0005524">
    <property type="term" value="F:ATP binding"/>
    <property type="evidence" value="ECO:0007669"/>
    <property type="project" value="UniProtKB-KW"/>
</dbReference>
<dbReference type="GO" id="GO:0033862">
    <property type="term" value="F:UMP kinase activity"/>
    <property type="evidence" value="ECO:0007669"/>
    <property type="project" value="UniProtKB-EC"/>
</dbReference>
<dbReference type="GO" id="GO:0044210">
    <property type="term" value="P:'de novo' CTP biosynthetic process"/>
    <property type="evidence" value="ECO:0007669"/>
    <property type="project" value="UniProtKB-UniRule"/>
</dbReference>
<dbReference type="GO" id="GO:0006225">
    <property type="term" value="P:UDP biosynthetic process"/>
    <property type="evidence" value="ECO:0007669"/>
    <property type="project" value="TreeGrafter"/>
</dbReference>
<dbReference type="CDD" id="cd04254">
    <property type="entry name" value="AAK_UMPK-PyrH-Ec"/>
    <property type="match status" value="1"/>
</dbReference>
<dbReference type="FunFam" id="3.40.1160.10:FF:000001">
    <property type="entry name" value="Uridylate kinase"/>
    <property type="match status" value="1"/>
</dbReference>
<dbReference type="Gene3D" id="3.40.1160.10">
    <property type="entry name" value="Acetylglutamate kinase-like"/>
    <property type="match status" value="1"/>
</dbReference>
<dbReference type="HAMAP" id="MF_01220_B">
    <property type="entry name" value="PyrH_B"/>
    <property type="match status" value="1"/>
</dbReference>
<dbReference type="InterPro" id="IPR036393">
    <property type="entry name" value="AceGlu_kinase-like_sf"/>
</dbReference>
<dbReference type="InterPro" id="IPR001048">
    <property type="entry name" value="Asp/Glu/Uridylate_kinase"/>
</dbReference>
<dbReference type="InterPro" id="IPR011817">
    <property type="entry name" value="Uridylate_kinase"/>
</dbReference>
<dbReference type="InterPro" id="IPR015963">
    <property type="entry name" value="Uridylate_kinase_bac"/>
</dbReference>
<dbReference type="NCBIfam" id="TIGR02075">
    <property type="entry name" value="pyrH_bact"/>
    <property type="match status" value="1"/>
</dbReference>
<dbReference type="PANTHER" id="PTHR42833">
    <property type="entry name" value="URIDYLATE KINASE"/>
    <property type="match status" value="1"/>
</dbReference>
<dbReference type="PANTHER" id="PTHR42833:SF4">
    <property type="entry name" value="URIDYLATE KINASE PUMPKIN, CHLOROPLASTIC"/>
    <property type="match status" value="1"/>
</dbReference>
<dbReference type="Pfam" id="PF00696">
    <property type="entry name" value="AA_kinase"/>
    <property type="match status" value="1"/>
</dbReference>
<dbReference type="PIRSF" id="PIRSF005650">
    <property type="entry name" value="Uridylate_kin"/>
    <property type="match status" value="1"/>
</dbReference>
<dbReference type="SUPFAM" id="SSF53633">
    <property type="entry name" value="Carbamate kinase-like"/>
    <property type="match status" value="1"/>
</dbReference>
<organism>
    <name type="scientific">Cupriavidus necator (strain ATCC 17699 / DSM 428 / KCTC 22496 / NCIMB 10442 / H16 / Stanier 337)</name>
    <name type="common">Ralstonia eutropha</name>
    <dbReference type="NCBI Taxonomy" id="381666"/>
    <lineage>
        <taxon>Bacteria</taxon>
        <taxon>Pseudomonadati</taxon>
        <taxon>Pseudomonadota</taxon>
        <taxon>Betaproteobacteria</taxon>
        <taxon>Burkholderiales</taxon>
        <taxon>Burkholderiaceae</taxon>
        <taxon>Cupriavidus</taxon>
    </lineage>
</organism>